<dbReference type="EMBL" id="M81570">
    <property type="protein sequence ID" value="AAA19192.1"/>
    <property type="molecule type" value="Unassigned_DNA"/>
</dbReference>
<dbReference type="SMR" id="P26129"/>
<dbReference type="IntAct" id="P26129">
    <property type="interactions" value="1"/>
</dbReference>
<dbReference type="GlyCosmos" id="P26129">
    <property type="glycosylation" value="1 site, No reported glycans"/>
</dbReference>
<dbReference type="GO" id="GO:0020002">
    <property type="term" value="C:host cell plasma membrane"/>
    <property type="evidence" value="ECO:0007669"/>
    <property type="project" value="UniProtKB-SubCell"/>
</dbReference>
<dbReference type="GO" id="GO:0016020">
    <property type="term" value="C:membrane"/>
    <property type="evidence" value="ECO:0007669"/>
    <property type="project" value="UniProtKB-UniRule"/>
</dbReference>
<dbReference type="GO" id="GO:0055036">
    <property type="term" value="C:virion membrane"/>
    <property type="evidence" value="ECO:0007669"/>
    <property type="project" value="UniProtKB-SubCell"/>
</dbReference>
<dbReference type="GO" id="GO:0005216">
    <property type="term" value="F:monoatomic ion channel activity"/>
    <property type="evidence" value="ECO:0007669"/>
    <property type="project" value="UniProtKB-UniRule"/>
</dbReference>
<dbReference type="GO" id="GO:0015078">
    <property type="term" value="F:proton transmembrane transporter activity"/>
    <property type="evidence" value="ECO:0007669"/>
    <property type="project" value="UniProtKB-UniRule"/>
</dbReference>
<dbReference type="GO" id="GO:0051259">
    <property type="term" value="P:protein complex oligomerization"/>
    <property type="evidence" value="ECO:0007669"/>
    <property type="project" value="UniProtKB-UniRule"/>
</dbReference>
<dbReference type="GO" id="GO:0044694">
    <property type="term" value="P:symbiont genome entry into host cell via pore formation in plasma membrane"/>
    <property type="evidence" value="ECO:0007669"/>
    <property type="project" value="UniProtKB-UniRule"/>
</dbReference>
<dbReference type="GO" id="GO:0140321">
    <property type="term" value="P:symbiont-mediated suppression of host autophagy"/>
    <property type="evidence" value="ECO:0007669"/>
    <property type="project" value="UniProtKB-KW"/>
</dbReference>
<dbReference type="Gene3D" id="6.10.250.1640">
    <property type="match status" value="1"/>
</dbReference>
<dbReference type="HAMAP" id="MF_04069">
    <property type="entry name" value="INFV_M2"/>
    <property type="match status" value="1"/>
</dbReference>
<dbReference type="InterPro" id="IPR002089">
    <property type="entry name" value="Flu_M2"/>
</dbReference>
<dbReference type="Pfam" id="PF00599">
    <property type="entry name" value="Flu_M2"/>
    <property type="match status" value="1"/>
</dbReference>
<keyword id="KW-0025">Alternative splicing</keyword>
<keyword id="KW-1015">Disulfide bond</keyword>
<keyword id="KW-0325">Glycoprotein</keyword>
<keyword id="KW-1032">Host cell membrane</keyword>
<keyword id="KW-1043">Host membrane</keyword>
<keyword id="KW-0945">Host-virus interaction</keyword>
<keyword id="KW-0375">Hydrogen ion transport</keyword>
<keyword id="KW-1083">Inhibition of host autophagy by virus</keyword>
<keyword id="KW-0407">Ion channel</keyword>
<keyword id="KW-0406">Ion transport</keyword>
<keyword id="KW-0449">Lipoprotein</keyword>
<keyword id="KW-0472">Membrane</keyword>
<keyword id="KW-0564">Palmitate</keyword>
<keyword id="KW-0597">Phosphoprotein</keyword>
<keyword id="KW-0735">Signal-anchor</keyword>
<keyword id="KW-0812">Transmembrane</keyword>
<keyword id="KW-1133">Transmembrane helix</keyword>
<keyword id="KW-0813">Transport</keyword>
<keyword id="KW-1182">Viral ion channel</keyword>
<keyword id="KW-0946">Virion</keyword>
<name>M2_I57A1</name>
<sequence>MSLLTEVETPIRNEWGCRCNDSSDPLVVAASIIGILHLILWILDRLFFKCNYRFFKHGLKRGPSTEGVPESMREEYRKEQQSAVDADDSHFVSIELE</sequence>
<evidence type="ECO:0000255" key="1">
    <source>
        <dbReference type="HAMAP-Rule" id="MF_04069"/>
    </source>
</evidence>
<evidence type="ECO:0000256" key="2">
    <source>
        <dbReference type="SAM" id="MobiDB-lite"/>
    </source>
</evidence>
<feature type="chain" id="PRO_0000078885" description="Matrix protein 2">
    <location>
        <begin position="1"/>
        <end position="97"/>
    </location>
</feature>
<feature type="topological domain" description="Virion surface" evidence="1">
    <location>
        <begin position="1"/>
        <end position="22"/>
    </location>
</feature>
<feature type="transmembrane region" description="Helical; Signal-anchor for type III membrane protein" evidence="1">
    <location>
        <begin position="23"/>
        <end position="43"/>
    </location>
</feature>
<feature type="topological domain" description="Intravirion" evidence="1">
    <location>
        <begin position="44"/>
        <end position="97"/>
    </location>
</feature>
<feature type="region of interest" description="Disordered" evidence="2">
    <location>
        <begin position="60"/>
        <end position="88"/>
    </location>
</feature>
<feature type="compositionally biased region" description="Basic and acidic residues" evidence="2">
    <location>
        <begin position="71"/>
        <end position="80"/>
    </location>
</feature>
<feature type="site" description="Essential for channel activity, possibly by being protonated during channel activation, and by forming the channel gate and the selective filter" evidence="1">
    <location>
        <position position="37"/>
    </location>
</feature>
<feature type="site" description="Seems to be involved in pH gating" evidence="1">
    <location>
        <position position="41"/>
    </location>
</feature>
<feature type="modified residue" description="Phosphoserine; by host" evidence="1">
    <location>
        <position position="64"/>
    </location>
</feature>
<feature type="modified residue" description="Phosphoserine; by host" evidence="1">
    <location>
        <position position="82"/>
    </location>
</feature>
<feature type="modified residue" description="Phosphoserine; by host" evidence="1">
    <location>
        <position position="93"/>
    </location>
</feature>
<feature type="lipid moiety-binding region" description="S-palmitoyl cysteine; by host" evidence="1">
    <location>
        <position position="50"/>
    </location>
</feature>
<feature type="glycosylation site" description="N-linked (GlcNAc...) asparagine; by host" evidence="1">
    <location>
        <position position="20"/>
    </location>
</feature>
<feature type="disulfide bond" description="Interchain (with C-17)" evidence="1">
    <location>
        <position position="17"/>
    </location>
</feature>
<feature type="disulfide bond" description="Interchain (with C-19)" evidence="1">
    <location>
        <position position="19"/>
    </location>
</feature>
<organismHost>
    <name type="scientific">Aves</name>
    <dbReference type="NCBI Taxonomy" id="8782"/>
</organismHost>
<organismHost>
    <name type="scientific">Homo sapiens</name>
    <name type="common">Human</name>
    <dbReference type="NCBI Taxonomy" id="9606"/>
</organismHost>
<reference key="1">
    <citation type="journal article" date="1992" name="Virology">
        <title>Sequence changes in the live attenuated, cold-adapted variants of influenza A/Leningrad/134/57 (H2N2) virus.</title>
        <authorList>
            <person name="Klimov A.I."/>
            <person name="Cox N.J."/>
            <person name="Yotov W.V."/>
            <person name="Rocha E."/>
            <person name="Alexandrova G.I."/>
            <person name="Kendal A.P."/>
        </authorList>
    </citation>
    <scope>NUCLEOTIDE SEQUENCE</scope>
</reference>
<reference key="2">
    <citation type="journal article" date="2004" name="Virus Res.">
        <title>Assembly and budding of influenza virus.</title>
        <authorList>
            <person name="Nayak D.P."/>
            <person name="Hui E.K."/>
            <person name="Barman S."/>
        </authorList>
    </citation>
    <scope>REVIEW</scope>
</reference>
<reference key="3">
    <citation type="journal article" date="2003" name="FEBS Lett.">
        <title>Proton conduction through the M2 protein of the influenza A virus; a quantitative, mechanistic analysis of experimental data.</title>
        <authorList>
            <person name="Lear J.D."/>
        </authorList>
    </citation>
    <scope>REVIEW</scope>
</reference>
<reference key="4">
    <citation type="journal article" date="2003" name="FEBS Lett.">
        <title>Computational studies of proton transport through the M2 channel.</title>
        <authorList>
            <person name="Wu Y."/>
            <person name="Voth G.A."/>
        </authorList>
    </citation>
    <scope>REVIEW</scope>
</reference>
<proteinExistence type="inferred from homology"/>
<organism>
    <name type="scientific">Influenza A virus (strain A/Leningrad/134/1957 H2N2)</name>
    <dbReference type="NCBI Taxonomy" id="387163"/>
    <lineage>
        <taxon>Viruses</taxon>
        <taxon>Riboviria</taxon>
        <taxon>Orthornavirae</taxon>
        <taxon>Negarnaviricota</taxon>
        <taxon>Polyploviricotina</taxon>
        <taxon>Insthoviricetes</taxon>
        <taxon>Articulavirales</taxon>
        <taxon>Orthomyxoviridae</taxon>
        <taxon>Alphainfluenzavirus</taxon>
        <taxon>Alphainfluenzavirus influenzae</taxon>
        <taxon>Influenza A virus</taxon>
    </lineage>
</organism>
<protein>
    <recommendedName>
        <fullName evidence="1">Matrix protein 2</fullName>
    </recommendedName>
    <alternativeName>
        <fullName evidence="1">Proton channel protein M2</fullName>
    </alternativeName>
</protein>
<comment type="function">
    <text evidence="1">Forms a proton-selective ion channel that is necessary for the efficient release of the viral genome during virus entry. After attaching to the cell surface, the virion enters the cell by endocytosis. Acidification of the endosome triggers M2 ion channel activity. The influx of protons into virion interior is believed to disrupt interactions between the viral ribonucleoprotein (RNP), matrix protein 1 (M1), and lipid bilayers, thereby freeing the viral genome from interaction with viral proteins and enabling RNA segments to migrate to the host cell nucleus, where influenza virus RNA transcription and replication occur. Also plays a role in viral proteins secretory pathway. Elevates the intravesicular pH of normally acidic compartments, such as trans-Golgi network, preventing newly formed hemagglutinin from premature switching to the fusion-active conformation.</text>
</comment>
<comment type="activity regulation">
    <text>The M2 protein from most influenza A strains is inhibited by amantadine and rimantadine, resulting in viral uncoating incapacity. Emergence of amantadine-resistant variants is usually rapid.</text>
</comment>
<comment type="subunit">
    <text evidence="1">Homotetramer; composed of two disulfide-linked dimers held together by non-covalent interactions. May interact with matrix protein 1.</text>
</comment>
<comment type="subcellular location">
    <subcellularLocation>
        <location evidence="1">Virion membrane</location>
    </subcellularLocation>
    <subcellularLocation>
        <location evidence="1">Host apical cell membrane</location>
        <topology evidence="1">Single-pass type III membrane protein</topology>
    </subcellularLocation>
    <text evidence="1">Abundantly expressed at the apical plasma membrane in infected polarized epithelial cells, in close proximity to budding and assembled virions. Minor component of virions (only 16-20 molecules/virion).</text>
</comment>
<comment type="alternative products">
    <event type="alternative splicing"/>
    <isoform>
        <id>P26129-1</id>
        <name>M2</name>
        <sequence type="displayed"/>
    </isoform>
    <isoform>
        <id>P26127-1</id>
        <name>M1</name>
        <sequence type="external"/>
    </isoform>
    <text>Only the first 9 residues are shared by the 2 isoforms.</text>
</comment>
<comment type="domain">
    <text evidence="1">Cytoplasmic tail plays an important role in virion assembly and morphogenesis.</text>
</comment>
<comment type="miscellaneous">
    <text evidence="1">When the channel is activated, one or more imidazole moieties of His-37 probably become bi-protonated.</text>
</comment>
<comment type="similarity">
    <text evidence="1">Belongs to the influenza viruses matrix protein M2 family.</text>
</comment>
<gene>
    <name evidence="1" type="primary">M</name>
</gene>
<accession>P26129</accession>